<proteinExistence type="inferred from homology"/>
<keyword id="KW-0067">ATP-binding</keyword>
<keyword id="KW-0238">DNA-binding</keyword>
<keyword id="KW-0479">Metal-binding</keyword>
<keyword id="KW-0547">Nucleotide-binding</keyword>
<keyword id="KW-1185">Reference proteome</keyword>
<keyword id="KW-0678">Repressor</keyword>
<keyword id="KW-0804">Transcription</keyword>
<keyword id="KW-0805">Transcription regulation</keyword>
<keyword id="KW-0862">Zinc</keyword>
<keyword id="KW-0863">Zinc-finger</keyword>
<protein>
    <recommendedName>
        <fullName evidence="1">Transcriptional repressor NrdR</fullName>
    </recommendedName>
</protein>
<feature type="chain" id="PRO_1000124561" description="Transcriptional repressor NrdR">
    <location>
        <begin position="1"/>
        <end position="158"/>
    </location>
</feature>
<feature type="domain" description="ATP-cone" evidence="1">
    <location>
        <begin position="49"/>
        <end position="139"/>
    </location>
</feature>
<feature type="zinc finger region" evidence="1">
    <location>
        <begin position="3"/>
        <end position="34"/>
    </location>
</feature>
<sequence>MKCPYCGYPDSKVIDSRPTDDNTSIRRRRECLKCGKRFTTYEKVEQLPILVIKKDNRREVYDRDKILKGMIKACEKRPVPIKVLEEITDEIDKRIINSMEREITSTEIGEMVMEKLKNVDEVAYVRFASVYRQFKDINTFMDELKKLLKENETKKEKT</sequence>
<organism>
    <name type="scientific">Thermoanaerobacter pseudethanolicus (strain ATCC 33223 / 39E)</name>
    <name type="common">Clostridium thermohydrosulfuricum</name>
    <dbReference type="NCBI Taxonomy" id="340099"/>
    <lineage>
        <taxon>Bacteria</taxon>
        <taxon>Bacillati</taxon>
        <taxon>Bacillota</taxon>
        <taxon>Clostridia</taxon>
        <taxon>Thermoanaerobacterales</taxon>
        <taxon>Thermoanaerobacteraceae</taxon>
        <taxon>Thermoanaerobacter</taxon>
    </lineage>
</organism>
<gene>
    <name evidence="1" type="primary">nrdR</name>
    <name type="ordered locus">Teth39_0824</name>
</gene>
<comment type="function">
    <text evidence="1">Negatively regulates transcription of bacterial ribonucleotide reductase nrd genes and operons by binding to NrdR-boxes.</text>
</comment>
<comment type="cofactor">
    <cofactor evidence="1">
        <name>Zn(2+)</name>
        <dbReference type="ChEBI" id="CHEBI:29105"/>
    </cofactor>
    <text evidence="1">Binds 1 zinc ion.</text>
</comment>
<comment type="similarity">
    <text evidence="1">Belongs to the NrdR family.</text>
</comment>
<reference key="1">
    <citation type="submission" date="2008-01" db="EMBL/GenBank/DDBJ databases">
        <title>Complete sequence of Thermoanaerobacter pseudethanolicus 39E.</title>
        <authorList>
            <person name="Copeland A."/>
            <person name="Lucas S."/>
            <person name="Lapidus A."/>
            <person name="Barry K."/>
            <person name="Glavina del Rio T."/>
            <person name="Dalin E."/>
            <person name="Tice H."/>
            <person name="Pitluck S."/>
            <person name="Bruce D."/>
            <person name="Goodwin L."/>
            <person name="Saunders E."/>
            <person name="Brettin T."/>
            <person name="Detter J.C."/>
            <person name="Han C."/>
            <person name="Schmutz J."/>
            <person name="Larimer F."/>
            <person name="Land M."/>
            <person name="Hauser L."/>
            <person name="Kyrpides N."/>
            <person name="Lykidis A."/>
            <person name="Hemme C."/>
            <person name="Fields M.W."/>
            <person name="He Z."/>
            <person name="Zhou J."/>
            <person name="Richardson P."/>
        </authorList>
    </citation>
    <scope>NUCLEOTIDE SEQUENCE [LARGE SCALE GENOMIC DNA]</scope>
    <source>
        <strain>ATCC 33223 / DSM 2355 / 39E</strain>
    </source>
</reference>
<accession>B0K8L8</accession>
<evidence type="ECO:0000255" key="1">
    <source>
        <dbReference type="HAMAP-Rule" id="MF_00440"/>
    </source>
</evidence>
<name>NRDR_THEP3</name>
<dbReference type="EMBL" id="CP000924">
    <property type="protein sequence ID" value="ABY94481.1"/>
    <property type="molecule type" value="Genomic_DNA"/>
</dbReference>
<dbReference type="RefSeq" id="WP_003867939.1">
    <property type="nucleotide sequence ID" value="NC_010321.1"/>
</dbReference>
<dbReference type="SMR" id="B0K8L8"/>
<dbReference type="STRING" id="340099.Teth39_0824"/>
<dbReference type="KEGG" id="tpd:Teth39_0824"/>
<dbReference type="eggNOG" id="COG1327">
    <property type="taxonomic scope" value="Bacteria"/>
</dbReference>
<dbReference type="HOGENOM" id="CLU_108412_0_0_9"/>
<dbReference type="Proteomes" id="UP000002156">
    <property type="component" value="Chromosome"/>
</dbReference>
<dbReference type="GO" id="GO:0005524">
    <property type="term" value="F:ATP binding"/>
    <property type="evidence" value="ECO:0007669"/>
    <property type="project" value="UniProtKB-KW"/>
</dbReference>
<dbReference type="GO" id="GO:0003677">
    <property type="term" value="F:DNA binding"/>
    <property type="evidence" value="ECO:0007669"/>
    <property type="project" value="UniProtKB-KW"/>
</dbReference>
<dbReference type="GO" id="GO:0008270">
    <property type="term" value="F:zinc ion binding"/>
    <property type="evidence" value="ECO:0007669"/>
    <property type="project" value="UniProtKB-UniRule"/>
</dbReference>
<dbReference type="GO" id="GO:0045892">
    <property type="term" value="P:negative regulation of DNA-templated transcription"/>
    <property type="evidence" value="ECO:0007669"/>
    <property type="project" value="UniProtKB-UniRule"/>
</dbReference>
<dbReference type="HAMAP" id="MF_00440">
    <property type="entry name" value="NrdR"/>
    <property type="match status" value="1"/>
</dbReference>
<dbReference type="InterPro" id="IPR005144">
    <property type="entry name" value="ATP-cone_dom"/>
</dbReference>
<dbReference type="InterPro" id="IPR055173">
    <property type="entry name" value="NrdR-like_N"/>
</dbReference>
<dbReference type="InterPro" id="IPR003796">
    <property type="entry name" value="RNR_NrdR-like"/>
</dbReference>
<dbReference type="NCBIfam" id="TIGR00244">
    <property type="entry name" value="transcriptional regulator NrdR"/>
    <property type="match status" value="1"/>
</dbReference>
<dbReference type="PANTHER" id="PTHR30455">
    <property type="entry name" value="TRANSCRIPTIONAL REPRESSOR NRDR"/>
    <property type="match status" value="1"/>
</dbReference>
<dbReference type="PANTHER" id="PTHR30455:SF2">
    <property type="entry name" value="TRANSCRIPTIONAL REPRESSOR NRDR"/>
    <property type="match status" value="1"/>
</dbReference>
<dbReference type="Pfam" id="PF03477">
    <property type="entry name" value="ATP-cone"/>
    <property type="match status" value="1"/>
</dbReference>
<dbReference type="Pfam" id="PF22811">
    <property type="entry name" value="Zn_ribbon_NrdR"/>
    <property type="match status" value="1"/>
</dbReference>
<dbReference type="PROSITE" id="PS51161">
    <property type="entry name" value="ATP_CONE"/>
    <property type="match status" value="1"/>
</dbReference>